<sequence>MDSKEMVVEEIMRIHRSLPLRPEIDDVETATSLIQNVEKEDRNRLEAIDKLVKTSSSEVPLELFNVFKEMKKSLVRFQSTEQTREATKILDLESVHVVFDELIQRASFCIASPNSTTALPRSVPVPAPVVSSDEIPFKSKEIISRDDTFVKKAKSSFYSDGLLAPSKPQVLDSTLHQAKNVAGNDGEKLSLIKLASLIEVSAKKATQELNLQHRLMDQLEWLPDSLGKLSSLVRLDLSENCIMVLPATIGGLISLTRLDLHSNRIGQLPESIGDLLNLVNLNLSGNQLSSLPSSFNRLIHLEELDLSSNSLSILPESIGSLVSLKKLDVETNNIEEIPHSISGCSSMEELRADYNRLKALPEAVGKLSTLEILTVRYNNIRQLPTTMSSMANLKELDVSFNELESVPESLCYAKTLVKLNIGNNFANLRSLPGLIGNLEKLEELDMSNNQIRFLPYSFKTLSNLRVLQTEQNPLEELPRDITEKGAQAVVQYMNDLVEARNTKSQRTKPKKSWVNSICFFCKSSTN</sequence>
<reference key="1">
    <citation type="journal article" date="2005" name="Plant Cell Physiol.">
        <title>PIRLs: a novel class of plant intracellular leucine-rich repeat proteins.</title>
        <authorList>
            <person name="Forsthoefel N.R."/>
            <person name="Cutler K."/>
            <person name="Port M.D."/>
            <person name="Yamamoto T."/>
            <person name="Vernon D.M."/>
        </authorList>
    </citation>
    <scope>NUCLEOTIDE SEQUENCE [MRNA]</scope>
    <scope>GENE FAMILY</scope>
    <scope>MOTIF GVYW</scope>
    <scope>TISSUE SPECIFICITY</scope>
</reference>
<reference key="2">
    <citation type="journal article" date="1999" name="Nature">
        <title>Sequence and analysis of chromosome 2 of the plant Arabidopsis thaliana.</title>
        <authorList>
            <person name="Lin X."/>
            <person name="Kaul S."/>
            <person name="Rounsley S.D."/>
            <person name="Shea T.P."/>
            <person name="Benito M.-I."/>
            <person name="Town C.D."/>
            <person name="Fujii C.Y."/>
            <person name="Mason T.M."/>
            <person name="Bowman C.L."/>
            <person name="Barnstead M.E."/>
            <person name="Feldblyum T.V."/>
            <person name="Buell C.R."/>
            <person name="Ketchum K.A."/>
            <person name="Lee J.J."/>
            <person name="Ronning C.M."/>
            <person name="Koo H.L."/>
            <person name="Moffat K.S."/>
            <person name="Cronin L.A."/>
            <person name="Shen M."/>
            <person name="Pai G."/>
            <person name="Van Aken S."/>
            <person name="Umayam L."/>
            <person name="Tallon L.J."/>
            <person name="Gill J.E."/>
            <person name="Adams M.D."/>
            <person name="Carrera A.J."/>
            <person name="Creasy T.H."/>
            <person name="Goodman H.M."/>
            <person name="Somerville C.R."/>
            <person name="Copenhaver G.P."/>
            <person name="Preuss D."/>
            <person name="Nierman W.C."/>
            <person name="White O."/>
            <person name="Eisen J.A."/>
            <person name="Salzberg S.L."/>
            <person name="Fraser C.M."/>
            <person name="Venter J.C."/>
        </authorList>
    </citation>
    <scope>NUCLEOTIDE SEQUENCE [LARGE SCALE GENOMIC DNA]</scope>
    <source>
        <strain>cv. Columbia</strain>
    </source>
</reference>
<reference key="3">
    <citation type="journal article" date="2017" name="Plant J.">
        <title>Araport11: a complete reannotation of the Arabidopsis thaliana reference genome.</title>
        <authorList>
            <person name="Cheng C.Y."/>
            <person name="Krishnakumar V."/>
            <person name="Chan A.P."/>
            <person name="Thibaud-Nissen F."/>
            <person name="Schobel S."/>
            <person name="Town C.D."/>
        </authorList>
    </citation>
    <scope>GENOME REANNOTATION</scope>
    <source>
        <strain>cv. Columbia</strain>
    </source>
</reference>
<reference key="4">
    <citation type="submission" date="2006-07" db="EMBL/GenBank/DDBJ databases">
        <title>Large-scale analysis of RIKEN Arabidopsis full-length (RAFL) cDNAs.</title>
        <authorList>
            <person name="Totoki Y."/>
            <person name="Seki M."/>
            <person name="Ishida J."/>
            <person name="Nakajima M."/>
            <person name="Enju A."/>
            <person name="Kamiya A."/>
            <person name="Narusaka M."/>
            <person name="Shin-i T."/>
            <person name="Nakagawa M."/>
            <person name="Sakamoto N."/>
            <person name="Oishi K."/>
            <person name="Kohara Y."/>
            <person name="Kobayashi M."/>
            <person name="Toyoda A."/>
            <person name="Sakaki Y."/>
            <person name="Sakurai T."/>
            <person name="Iida K."/>
            <person name="Akiyama K."/>
            <person name="Satou M."/>
            <person name="Toyoda T."/>
            <person name="Konagaya A."/>
            <person name="Carninci P."/>
            <person name="Kawai J."/>
            <person name="Hayashizaki Y."/>
            <person name="Shinozaki K."/>
        </authorList>
    </citation>
    <scope>NUCLEOTIDE SEQUENCE [LARGE SCALE MRNA]</scope>
    <source>
        <strain>cv. Columbia</strain>
    </source>
</reference>
<feature type="chain" id="PRO_0000423605" description="Plant intracellular Ras-group-related LRR protein 5">
    <location>
        <begin position="1"/>
        <end position="526"/>
    </location>
</feature>
<feature type="repeat" description="LRR 1">
    <location>
        <begin position="229"/>
        <end position="252"/>
    </location>
</feature>
<feature type="repeat" description="LRR 2">
    <location>
        <begin position="253"/>
        <end position="275"/>
    </location>
</feature>
<feature type="repeat" description="LRR 3">
    <location>
        <begin position="276"/>
        <end position="297"/>
    </location>
</feature>
<feature type="repeat" description="LRR 4">
    <location>
        <begin position="298"/>
        <end position="321"/>
    </location>
</feature>
<feature type="repeat" description="LRR 5">
    <location>
        <begin position="323"/>
        <end position="344"/>
    </location>
</feature>
<feature type="repeat" description="LRR 6">
    <location>
        <begin position="346"/>
        <end position="367"/>
    </location>
</feature>
<feature type="repeat" description="LRR 7">
    <location>
        <begin position="368"/>
        <end position="390"/>
    </location>
</feature>
<feature type="repeat" description="LRR 8">
    <location>
        <begin position="391"/>
        <end position="414"/>
    </location>
</feature>
<feature type="repeat" description="LRR 9">
    <location>
        <begin position="416"/>
        <end position="437"/>
    </location>
</feature>
<feature type="repeat" description="LRR 10">
    <location>
        <begin position="438"/>
        <end position="463"/>
    </location>
</feature>
<feature type="repeat" description="LRR 11">
    <location>
        <begin position="465"/>
        <end position="484"/>
    </location>
</feature>
<feature type="short sequence motif" description="GVYW; degenerate">
    <location>
        <begin position="485"/>
        <end position="492"/>
    </location>
</feature>
<accession>Q5G5E0</accession>
<proteinExistence type="evidence at transcript level"/>
<gene>
    <name type="primary">PIRL5</name>
    <name type="ordered locus">At2g17440</name>
    <name type="ORF">F5J6.20</name>
</gene>
<name>PIRL5_ARATH</name>
<evidence type="ECO:0000250" key="1"/>
<evidence type="ECO:0000269" key="2">
    <source>
    </source>
</evidence>
<evidence type="ECO:0000305" key="3"/>
<dbReference type="EMBL" id="AY849575">
    <property type="protein sequence ID" value="AAW57414.1"/>
    <property type="molecule type" value="mRNA"/>
</dbReference>
<dbReference type="EMBL" id="CP002685">
    <property type="protein sequence ID" value="AEC06625.1"/>
    <property type="molecule type" value="Genomic_DNA"/>
</dbReference>
<dbReference type="EMBL" id="AK228738">
    <property type="protein sequence ID" value="BAF00638.1"/>
    <property type="molecule type" value="mRNA"/>
</dbReference>
<dbReference type="PIR" id="C84552">
    <property type="entry name" value="C84552"/>
</dbReference>
<dbReference type="RefSeq" id="NP_179336.1">
    <property type="nucleotide sequence ID" value="NM_127299.4"/>
</dbReference>
<dbReference type="SMR" id="Q5G5E0"/>
<dbReference type="BioGRID" id="1607">
    <property type="interactions" value="2"/>
</dbReference>
<dbReference type="FunCoup" id="Q5G5E0">
    <property type="interactions" value="71"/>
</dbReference>
<dbReference type="STRING" id="3702.Q5G5E0"/>
<dbReference type="iPTMnet" id="Q5G5E0"/>
<dbReference type="PaxDb" id="3702-AT2G17440.1"/>
<dbReference type="ProteomicsDB" id="234760"/>
<dbReference type="EnsemblPlants" id="AT2G17440.1">
    <property type="protein sequence ID" value="AT2G17440.1"/>
    <property type="gene ID" value="AT2G17440"/>
</dbReference>
<dbReference type="GeneID" id="816250"/>
<dbReference type="Gramene" id="AT2G17440.1">
    <property type="protein sequence ID" value="AT2G17440.1"/>
    <property type="gene ID" value="AT2G17440"/>
</dbReference>
<dbReference type="KEGG" id="ath:AT2G17440"/>
<dbReference type="Araport" id="AT2G17440"/>
<dbReference type="TAIR" id="AT2G17440">
    <property type="gene designation" value="PIRL5"/>
</dbReference>
<dbReference type="eggNOG" id="KOG0619">
    <property type="taxonomic scope" value="Eukaryota"/>
</dbReference>
<dbReference type="HOGENOM" id="CLU_038753_0_0_1"/>
<dbReference type="InParanoid" id="Q5G5E0"/>
<dbReference type="OMA" id="LMDQLEW"/>
<dbReference type="PhylomeDB" id="Q5G5E0"/>
<dbReference type="PRO" id="PR:Q5G5E0"/>
<dbReference type="Proteomes" id="UP000006548">
    <property type="component" value="Chromosome 2"/>
</dbReference>
<dbReference type="ExpressionAtlas" id="Q5G5E0">
    <property type="expression patterns" value="baseline and differential"/>
</dbReference>
<dbReference type="GO" id="GO:0005886">
    <property type="term" value="C:plasma membrane"/>
    <property type="evidence" value="ECO:0007005"/>
    <property type="project" value="TAIR"/>
</dbReference>
<dbReference type="FunFam" id="3.80.10.10:FF:000405">
    <property type="entry name" value="Plant intracellular Ras-group-related LRR protein 4"/>
    <property type="match status" value="1"/>
</dbReference>
<dbReference type="Gene3D" id="3.80.10.10">
    <property type="entry name" value="Ribonuclease Inhibitor"/>
    <property type="match status" value="3"/>
</dbReference>
<dbReference type="InterPro" id="IPR001611">
    <property type="entry name" value="Leu-rich_rpt"/>
</dbReference>
<dbReference type="InterPro" id="IPR003591">
    <property type="entry name" value="Leu-rich_rpt_typical-subtyp"/>
</dbReference>
<dbReference type="InterPro" id="IPR032675">
    <property type="entry name" value="LRR_dom_sf"/>
</dbReference>
<dbReference type="InterPro" id="IPR050216">
    <property type="entry name" value="LRR_domain-containing"/>
</dbReference>
<dbReference type="InterPro" id="IPR055414">
    <property type="entry name" value="LRR_R13L4/SHOC2-like"/>
</dbReference>
<dbReference type="PANTHER" id="PTHR48051">
    <property type="match status" value="1"/>
</dbReference>
<dbReference type="PANTHER" id="PTHR48051:SF1">
    <property type="entry name" value="RAS SUPPRESSOR PROTEIN 1"/>
    <property type="match status" value="1"/>
</dbReference>
<dbReference type="Pfam" id="PF23598">
    <property type="entry name" value="LRR_14"/>
    <property type="match status" value="1"/>
</dbReference>
<dbReference type="Pfam" id="PF13855">
    <property type="entry name" value="LRR_8"/>
    <property type="match status" value="2"/>
</dbReference>
<dbReference type="PRINTS" id="PR00019">
    <property type="entry name" value="LEURICHRPT"/>
</dbReference>
<dbReference type="SMART" id="SM00364">
    <property type="entry name" value="LRR_BAC"/>
    <property type="match status" value="10"/>
</dbReference>
<dbReference type="SMART" id="SM00365">
    <property type="entry name" value="LRR_SD22"/>
    <property type="match status" value="4"/>
</dbReference>
<dbReference type="SMART" id="SM00369">
    <property type="entry name" value="LRR_TYP"/>
    <property type="match status" value="9"/>
</dbReference>
<dbReference type="SUPFAM" id="SSF52058">
    <property type="entry name" value="L domain-like"/>
    <property type="match status" value="1"/>
</dbReference>
<dbReference type="PROSITE" id="PS51450">
    <property type="entry name" value="LRR"/>
    <property type="match status" value="10"/>
</dbReference>
<organism>
    <name type="scientific">Arabidopsis thaliana</name>
    <name type="common">Mouse-ear cress</name>
    <dbReference type="NCBI Taxonomy" id="3702"/>
    <lineage>
        <taxon>Eukaryota</taxon>
        <taxon>Viridiplantae</taxon>
        <taxon>Streptophyta</taxon>
        <taxon>Embryophyta</taxon>
        <taxon>Tracheophyta</taxon>
        <taxon>Spermatophyta</taxon>
        <taxon>Magnoliopsida</taxon>
        <taxon>eudicotyledons</taxon>
        <taxon>Gunneridae</taxon>
        <taxon>Pentapetalae</taxon>
        <taxon>rosids</taxon>
        <taxon>malvids</taxon>
        <taxon>Brassicales</taxon>
        <taxon>Brassicaceae</taxon>
        <taxon>Camelineae</taxon>
        <taxon>Arabidopsis</taxon>
    </lineage>
</organism>
<keyword id="KW-0433">Leucine-rich repeat</keyword>
<keyword id="KW-1185">Reference proteome</keyword>
<keyword id="KW-0677">Repeat</keyword>
<protein>
    <recommendedName>
        <fullName>Plant intracellular Ras-group-related LRR protein 5</fullName>
    </recommendedName>
</protein>
<comment type="function">
    <text evidence="1">Leucine-rich repeat protein that likely mediates protein interactions, possibly in the context of signal transduction.</text>
</comment>
<comment type="tissue specificity">
    <text evidence="2">Widely expressed but preferentially in roots.</text>
</comment>
<comment type="similarity">
    <text evidence="3">Belongs to the SHOC2 family.</text>
</comment>